<reference key="1">
    <citation type="journal article" date="2006" name="Proc. Natl. Acad. Sci. U.S.A.">
        <title>Genome sequence of Synechococcus CC9311: insights into adaptation to a coastal environment.</title>
        <authorList>
            <person name="Palenik B."/>
            <person name="Ren Q."/>
            <person name="Dupont C.L."/>
            <person name="Myers G.S."/>
            <person name="Heidelberg J.F."/>
            <person name="Badger J.H."/>
            <person name="Madupu R."/>
            <person name="Nelson W.C."/>
            <person name="Brinkac L.M."/>
            <person name="Dodson R.J."/>
            <person name="Durkin A.S."/>
            <person name="Daugherty S.C."/>
            <person name="Sullivan S.A."/>
            <person name="Khouri H."/>
            <person name="Mohamoud Y."/>
            <person name="Halpin R."/>
            <person name="Paulsen I.T."/>
        </authorList>
    </citation>
    <scope>NUCLEOTIDE SEQUENCE [LARGE SCALE GENOMIC DNA]</scope>
    <source>
        <strain>CC9311</strain>
    </source>
</reference>
<sequence length="202" mass="22092">MARSFAQLARSAEKSSSSIAVPKEPLETAPLDIHTLGDDALRGDARRIGKVDERVRDLARDMLRSMYTASGIGLAAPQVGVHQQLLVIDLDFETPSTPPLVLINPEITTCSASVDTYEEGCLSIPGVYLDVVRPTAIQLSFRDEMGRPRTMKADGLMARCIQHEMDHLRGVLFVDRVTDAGGLKKELKDHGFLATDVRPITP</sequence>
<feature type="chain" id="PRO_0000301115" description="Peptide deformylase">
    <location>
        <begin position="1"/>
        <end position="202"/>
    </location>
</feature>
<feature type="active site" evidence="1">
    <location>
        <position position="164"/>
    </location>
</feature>
<feature type="binding site" evidence="1">
    <location>
        <position position="121"/>
    </location>
    <ligand>
        <name>Fe cation</name>
        <dbReference type="ChEBI" id="CHEBI:24875"/>
    </ligand>
</feature>
<feature type="binding site" evidence="1">
    <location>
        <position position="163"/>
    </location>
    <ligand>
        <name>Fe cation</name>
        <dbReference type="ChEBI" id="CHEBI:24875"/>
    </ligand>
</feature>
<feature type="binding site" evidence="1">
    <location>
        <position position="167"/>
    </location>
    <ligand>
        <name>Fe cation</name>
        <dbReference type="ChEBI" id="CHEBI:24875"/>
    </ligand>
</feature>
<organism>
    <name type="scientific">Synechococcus sp. (strain CC9311)</name>
    <dbReference type="NCBI Taxonomy" id="64471"/>
    <lineage>
        <taxon>Bacteria</taxon>
        <taxon>Bacillati</taxon>
        <taxon>Cyanobacteriota</taxon>
        <taxon>Cyanophyceae</taxon>
        <taxon>Synechococcales</taxon>
        <taxon>Synechococcaceae</taxon>
        <taxon>Synechococcus</taxon>
    </lineage>
</organism>
<protein>
    <recommendedName>
        <fullName evidence="1">Peptide deformylase</fullName>
        <shortName evidence="1">PDF</shortName>
        <ecNumber evidence="1">3.5.1.88</ecNumber>
    </recommendedName>
    <alternativeName>
        <fullName evidence="1">Polypeptide deformylase</fullName>
    </alternativeName>
</protein>
<proteinExistence type="inferred from homology"/>
<comment type="function">
    <text evidence="1">Removes the formyl group from the N-terminal Met of newly synthesized proteins. Requires at least a dipeptide for an efficient rate of reaction. N-terminal L-methionine is a prerequisite for activity but the enzyme has broad specificity at other positions.</text>
</comment>
<comment type="catalytic activity">
    <reaction evidence="1">
        <text>N-terminal N-formyl-L-methionyl-[peptide] + H2O = N-terminal L-methionyl-[peptide] + formate</text>
        <dbReference type="Rhea" id="RHEA:24420"/>
        <dbReference type="Rhea" id="RHEA-COMP:10639"/>
        <dbReference type="Rhea" id="RHEA-COMP:10640"/>
        <dbReference type="ChEBI" id="CHEBI:15377"/>
        <dbReference type="ChEBI" id="CHEBI:15740"/>
        <dbReference type="ChEBI" id="CHEBI:49298"/>
        <dbReference type="ChEBI" id="CHEBI:64731"/>
        <dbReference type="EC" id="3.5.1.88"/>
    </reaction>
</comment>
<comment type="cofactor">
    <cofactor evidence="1">
        <name>Fe(2+)</name>
        <dbReference type="ChEBI" id="CHEBI:29033"/>
    </cofactor>
    <text evidence="1">Binds 1 Fe(2+) ion.</text>
</comment>
<comment type="similarity">
    <text evidence="1">Belongs to the polypeptide deformylase family.</text>
</comment>
<dbReference type="EC" id="3.5.1.88" evidence="1"/>
<dbReference type="EMBL" id="CP000435">
    <property type="protein sequence ID" value="ABI47601.1"/>
    <property type="molecule type" value="Genomic_DNA"/>
</dbReference>
<dbReference type="RefSeq" id="WP_011620375.1">
    <property type="nucleotide sequence ID" value="NC_008319.1"/>
</dbReference>
<dbReference type="SMR" id="Q0I7A5"/>
<dbReference type="STRING" id="64471.sync_2473"/>
<dbReference type="KEGG" id="syg:sync_2473"/>
<dbReference type="eggNOG" id="COG0242">
    <property type="taxonomic scope" value="Bacteria"/>
</dbReference>
<dbReference type="HOGENOM" id="CLU_061901_4_2_3"/>
<dbReference type="OrthoDB" id="9784988at2"/>
<dbReference type="Proteomes" id="UP000001961">
    <property type="component" value="Chromosome"/>
</dbReference>
<dbReference type="GO" id="GO:0046872">
    <property type="term" value="F:metal ion binding"/>
    <property type="evidence" value="ECO:0007669"/>
    <property type="project" value="UniProtKB-KW"/>
</dbReference>
<dbReference type="GO" id="GO:0042586">
    <property type="term" value="F:peptide deformylase activity"/>
    <property type="evidence" value="ECO:0007669"/>
    <property type="project" value="UniProtKB-UniRule"/>
</dbReference>
<dbReference type="GO" id="GO:0043686">
    <property type="term" value="P:co-translational protein modification"/>
    <property type="evidence" value="ECO:0007669"/>
    <property type="project" value="TreeGrafter"/>
</dbReference>
<dbReference type="GO" id="GO:0006412">
    <property type="term" value="P:translation"/>
    <property type="evidence" value="ECO:0007669"/>
    <property type="project" value="UniProtKB-UniRule"/>
</dbReference>
<dbReference type="CDD" id="cd00487">
    <property type="entry name" value="Pep_deformylase"/>
    <property type="match status" value="1"/>
</dbReference>
<dbReference type="Gene3D" id="3.90.45.10">
    <property type="entry name" value="Peptide deformylase"/>
    <property type="match status" value="1"/>
</dbReference>
<dbReference type="HAMAP" id="MF_00163">
    <property type="entry name" value="Pep_deformylase"/>
    <property type="match status" value="1"/>
</dbReference>
<dbReference type="InterPro" id="IPR023635">
    <property type="entry name" value="Peptide_deformylase"/>
</dbReference>
<dbReference type="InterPro" id="IPR036821">
    <property type="entry name" value="Peptide_deformylase_sf"/>
</dbReference>
<dbReference type="NCBIfam" id="TIGR00079">
    <property type="entry name" value="pept_deformyl"/>
    <property type="match status" value="1"/>
</dbReference>
<dbReference type="NCBIfam" id="NF001159">
    <property type="entry name" value="PRK00150.1-3"/>
    <property type="match status" value="1"/>
</dbReference>
<dbReference type="PANTHER" id="PTHR10458">
    <property type="entry name" value="PEPTIDE DEFORMYLASE"/>
    <property type="match status" value="1"/>
</dbReference>
<dbReference type="PANTHER" id="PTHR10458:SF22">
    <property type="entry name" value="PEPTIDE DEFORMYLASE"/>
    <property type="match status" value="1"/>
</dbReference>
<dbReference type="Pfam" id="PF01327">
    <property type="entry name" value="Pep_deformylase"/>
    <property type="match status" value="1"/>
</dbReference>
<dbReference type="PIRSF" id="PIRSF004749">
    <property type="entry name" value="Pep_def"/>
    <property type="match status" value="1"/>
</dbReference>
<dbReference type="PRINTS" id="PR01576">
    <property type="entry name" value="PDEFORMYLASE"/>
</dbReference>
<dbReference type="SUPFAM" id="SSF56420">
    <property type="entry name" value="Peptide deformylase"/>
    <property type="match status" value="1"/>
</dbReference>
<name>DEF_SYNS3</name>
<gene>
    <name evidence="1" type="primary">def</name>
    <name type="ordered locus">sync_2473</name>
</gene>
<accession>Q0I7A5</accession>
<keyword id="KW-0378">Hydrolase</keyword>
<keyword id="KW-0408">Iron</keyword>
<keyword id="KW-0479">Metal-binding</keyword>
<keyword id="KW-0648">Protein biosynthesis</keyword>
<keyword id="KW-1185">Reference proteome</keyword>
<evidence type="ECO:0000255" key="1">
    <source>
        <dbReference type="HAMAP-Rule" id="MF_00163"/>
    </source>
</evidence>